<dbReference type="EMBL" id="CP000316">
    <property type="protein sequence ID" value="ABE42452.1"/>
    <property type="molecule type" value="Genomic_DNA"/>
</dbReference>
<dbReference type="RefSeq" id="WP_011481458.1">
    <property type="nucleotide sequence ID" value="NC_007948.1"/>
</dbReference>
<dbReference type="SMR" id="Q12G90"/>
<dbReference type="STRING" id="296591.Bpro_0488"/>
<dbReference type="KEGG" id="pol:Bpro_0488"/>
<dbReference type="eggNOG" id="COG0199">
    <property type="taxonomic scope" value="Bacteria"/>
</dbReference>
<dbReference type="HOGENOM" id="CLU_139869_0_1_4"/>
<dbReference type="OrthoDB" id="9810484at2"/>
<dbReference type="Proteomes" id="UP000001983">
    <property type="component" value="Chromosome"/>
</dbReference>
<dbReference type="GO" id="GO:0005737">
    <property type="term" value="C:cytoplasm"/>
    <property type="evidence" value="ECO:0007669"/>
    <property type="project" value="UniProtKB-ARBA"/>
</dbReference>
<dbReference type="GO" id="GO:0015935">
    <property type="term" value="C:small ribosomal subunit"/>
    <property type="evidence" value="ECO:0007669"/>
    <property type="project" value="TreeGrafter"/>
</dbReference>
<dbReference type="GO" id="GO:0019843">
    <property type="term" value="F:rRNA binding"/>
    <property type="evidence" value="ECO:0007669"/>
    <property type="project" value="UniProtKB-UniRule"/>
</dbReference>
<dbReference type="GO" id="GO:0003735">
    <property type="term" value="F:structural constituent of ribosome"/>
    <property type="evidence" value="ECO:0007669"/>
    <property type="project" value="InterPro"/>
</dbReference>
<dbReference type="GO" id="GO:0006412">
    <property type="term" value="P:translation"/>
    <property type="evidence" value="ECO:0007669"/>
    <property type="project" value="UniProtKB-UniRule"/>
</dbReference>
<dbReference type="FunFam" id="1.10.287.1480:FF:000001">
    <property type="entry name" value="30S ribosomal protein S14"/>
    <property type="match status" value="1"/>
</dbReference>
<dbReference type="Gene3D" id="1.10.287.1480">
    <property type="match status" value="1"/>
</dbReference>
<dbReference type="HAMAP" id="MF_00537">
    <property type="entry name" value="Ribosomal_uS14_1"/>
    <property type="match status" value="1"/>
</dbReference>
<dbReference type="InterPro" id="IPR001209">
    <property type="entry name" value="Ribosomal_uS14"/>
</dbReference>
<dbReference type="InterPro" id="IPR023036">
    <property type="entry name" value="Ribosomal_uS14_bac/plastid"/>
</dbReference>
<dbReference type="NCBIfam" id="NF006477">
    <property type="entry name" value="PRK08881.1"/>
    <property type="match status" value="1"/>
</dbReference>
<dbReference type="PANTHER" id="PTHR19836">
    <property type="entry name" value="30S RIBOSOMAL PROTEIN S14"/>
    <property type="match status" value="1"/>
</dbReference>
<dbReference type="PANTHER" id="PTHR19836:SF19">
    <property type="entry name" value="SMALL RIBOSOMAL SUBUNIT PROTEIN US14M"/>
    <property type="match status" value="1"/>
</dbReference>
<dbReference type="Pfam" id="PF00253">
    <property type="entry name" value="Ribosomal_S14"/>
    <property type="match status" value="1"/>
</dbReference>
<dbReference type="SUPFAM" id="SSF57716">
    <property type="entry name" value="Glucocorticoid receptor-like (DNA-binding domain)"/>
    <property type="match status" value="1"/>
</dbReference>
<feature type="chain" id="PRO_1000128491" description="Small ribosomal subunit protein uS14">
    <location>
        <begin position="1"/>
        <end position="101"/>
    </location>
</feature>
<sequence>MAKQALLQRELKREKLAAKFAKKYAELKATSNDAKRSDEERALARLELQKLPRNANPTRQRNRCAITGRPRGTFRQFGLARAKIRELAFAGDIPGITKASW</sequence>
<reference key="1">
    <citation type="journal article" date="2008" name="Appl. Environ. Microbiol.">
        <title>The genome of Polaromonas sp. strain JS666: insights into the evolution of a hydrocarbon- and xenobiotic-degrading bacterium, and features of relevance to biotechnology.</title>
        <authorList>
            <person name="Mattes T.E."/>
            <person name="Alexander A.K."/>
            <person name="Richardson P.M."/>
            <person name="Munk A.C."/>
            <person name="Han C.S."/>
            <person name="Stothard P."/>
            <person name="Coleman N.V."/>
        </authorList>
    </citation>
    <scope>NUCLEOTIDE SEQUENCE [LARGE SCALE GENOMIC DNA]</scope>
    <source>
        <strain>JS666 / ATCC BAA-500</strain>
    </source>
</reference>
<evidence type="ECO:0000255" key="1">
    <source>
        <dbReference type="HAMAP-Rule" id="MF_00537"/>
    </source>
</evidence>
<evidence type="ECO:0000305" key="2"/>
<name>RS14_POLSJ</name>
<accession>Q12G90</accession>
<gene>
    <name evidence="1" type="primary">rpsN</name>
    <name type="ordered locus">Bpro_0488</name>
</gene>
<protein>
    <recommendedName>
        <fullName evidence="1">Small ribosomal subunit protein uS14</fullName>
    </recommendedName>
    <alternativeName>
        <fullName evidence="2">30S ribosomal protein S14</fullName>
    </alternativeName>
</protein>
<organism>
    <name type="scientific">Polaromonas sp. (strain JS666 / ATCC BAA-500)</name>
    <dbReference type="NCBI Taxonomy" id="296591"/>
    <lineage>
        <taxon>Bacteria</taxon>
        <taxon>Pseudomonadati</taxon>
        <taxon>Pseudomonadota</taxon>
        <taxon>Betaproteobacteria</taxon>
        <taxon>Burkholderiales</taxon>
        <taxon>Comamonadaceae</taxon>
        <taxon>Polaromonas</taxon>
    </lineage>
</organism>
<comment type="function">
    <text evidence="1">Binds 16S rRNA, required for the assembly of 30S particles and may also be responsible for determining the conformation of the 16S rRNA at the A site.</text>
</comment>
<comment type="subunit">
    <text evidence="1">Part of the 30S ribosomal subunit. Contacts proteins S3 and S10.</text>
</comment>
<comment type="similarity">
    <text evidence="1">Belongs to the universal ribosomal protein uS14 family.</text>
</comment>
<keyword id="KW-1185">Reference proteome</keyword>
<keyword id="KW-0687">Ribonucleoprotein</keyword>
<keyword id="KW-0689">Ribosomal protein</keyword>
<keyword id="KW-0694">RNA-binding</keyword>
<keyword id="KW-0699">rRNA-binding</keyword>
<proteinExistence type="inferred from homology"/>